<sequence length="546" mass="61670">MGSRNSSSAGSGSGDPSEGLPRRGAGLRRSEEEEEEDEDVDLAQVLAYLLRRGQVRLVQGGGAANLQFIQALLDSEEENDRAWDGRLGDRYNPPVDATPDTRELEFNEIKTQVELATGQLGLRRAAQKHSFPRMLHQRERGLCHRGSFSLGEQSRVISHFLPNDLGFTDSYSQKAFCGIYSKDGQIFMSACQDQTIRLYDCRYGRFRKFKSIKARDVGWSVLDVAFTPDGNHFLYSSWSDYIHICNIYGEGDTHTALDLRPDERRFAVFSIAVSSDGREVLGGANDGCLYVFDREQNRRTLQIESHEDDVNAVAFADISSQILFSGGDDAICKVWDRRTMREDDPKPVGALAGHQDGITFIDSKGDARYLISNSKDQTIKLWDIRRFSSREGMEASRQAATQQNWDYRWQQVPKKAWRKLKLPGDSSLMTYRGHGVLHTLIRCRFSPIHSTGQQFIYSGCSTGKVVVYDLLSGHIVKKLTNHKACVRDVSWHPFEEKIVSSSWDGNLRLWQYRQAEYFQDDMPESEECASAPAPVPQSSTPFSSPQ</sequence>
<proteinExistence type="evidence at protein level"/>
<evidence type="ECO:0000250" key="1">
    <source>
        <dbReference type="UniProtKB" id="Q91VU6"/>
    </source>
</evidence>
<evidence type="ECO:0000256" key="2">
    <source>
        <dbReference type="SAM" id="MobiDB-lite"/>
    </source>
</evidence>
<evidence type="ECO:0000269" key="3">
    <source>
    </source>
</evidence>
<evidence type="ECO:0000269" key="4">
    <source>
    </source>
</evidence>
<evidence type="ECO:0000269" key="5">
    <source>
    </source>
</evidence>
<evidence type="ECO:0000269" key="6">
    <source ref="1"/>
</evidence>
<evidence type="ECO:0000269" key="7">
    <source ref="7"/>
</evidence>
<evidence type="ECO:0000303" key="8">
    <source>
    </source>
</evidence>
<evidence type="ECO:0000303" key="9">
    <source ref="3"/>
</evidence>
<evidence type="ECO:0000305" key="10"/>
<evidence type="ECO:0007744" key="11">
    <source>
    </source>
</evidence>
<accession>Q8TEB1</accession>
<accession>B3KQ83</accession>
<accession>D3DS56</accession>
<accession>Q5D039</accession>
<accession>Q86U00</accession>
<accession>Q86U39</accession>
<accession>Q8NDN2</accession>
<accession>Q9H2J0</accession>
<accession>Q9H3A3</accession>
<accession>Q9H5C9</accession>
<name>DCA11_HUMAN</name>
<gene>
    <name type="primary">DCAF11</name>
    <name type="synonym">WDR23</name>
    <name type="ORF">GL014</name>
    <name type="ORF">PRO2389</name>
</gene>
<dbReference type="EMBL" id="AF267858">
    <property type="protein sequence ID" value="AAG44727.1"/>
    <property type="status" value="ALT_FRAME"/>
    <property type="molecule type" value="mRNA"/>
</dbReference>
<dbReference type="EMBL" id="AK027223">
    <property type="protein sequence ID" value="BAB15698.1"/>
    <property type="status" value="ALT_INIT"/>
    <property type="molecule type" value="mRNA"/>
</dbReference>
<dbReference type="EMBL" id="AK057636">
    <property type="protein sequence ID" value="BAG51945.1"/>
    <property type="molecule type" value="mRNA"/>
</dbReference>
<dbReference type="EMBL" id="AK074296">
    <property type="protein sequence ID" value="BAB85041.1"/>
    <property type="molecule type" value="mRNA"/>
</dbReference>
<dbReference type="EMBL" id="BX161405">
    <property type="protein sequence ID" value="CAD61885.1"/>
    <property type="molecule type" value="mRNA"/>
</dbReference>
<dbReference type="EMBL" id="BX247970">
    <property type="protein sequence ID" value="CAD62308.1"/>
    <property type="molecule type" value="mRNA"/>
</dbReference>
<dbReference type="EMBL" id="AL136295">
    <property type="status" value="NOT_ANNOTATED_CDS"/>
    <property type="molecule type" value="Genomic_DNA"/>
</dbReference>
<dbReference type="EMBL" id="CH471078">
    <property type="protein sequence ID" value="EAW66110.1"/>
    <property type="molecule type" value="Genomic_DNA"/>
</dbReference>
<dbReference type="EMBL" id="CH471078">
    <property type="protein sequence ID" value="EAW66111.1"/>
    <property type="molecule type" value="Genomic_DNA"/>
</dbReference>
<dbReference type="EMBL" id="CH471078">
    <property type="protein sequence ID" value="EAW66112.1"/>
    <property type="molecule type" value="Genomic_DNA"/>
</dbReference>
<dbReference type="EMBL" id="CH471078">
    <property type="protein sequence ID" value="EAW66113.1"/>
    <property type="molecule type" value="Genomic_DNA"/>
</dbReference>
<dbReference type="EMBL" id="CH471078">
    <property type="protein sequence ID" value="EAW66114.1"/>
    <property type="molecule type" value="Genomic_DNA"/>
</dbReference>
<dbReference type="EMBL" id="BC008858">
    <property type="protein sequence ID" value="AAH08858.2"/>
    <property type="molecule type" value="mRNA"/>
</dbReference>
<dbReference type="EMBL" id="BC067132">
    <property type="protein sequence ID" value="AAH67132.1"/>
    <property type="molecule type" value="mRNA"/>
</dbReference>
<dbReference type="EMBL" id="AF130070">
    <property type="protein sequence ID" value="AAG35498.1"/>
    <property type="status" value="ALT_INIT"/>
    <property type="molecule type" value="mRNA"/>
</dbReference>
<dbReference type="EMBL" id="AL833831">
    <property type="protein sequence ID" value="CAD38691.1"/>
    <property type="molecule type" value="mRNA"/>
</dbReference>
<dbReference type="CCDS" id="CCDS41929.1">
    <molecule id="Q8TEB1-2"/>
</dbReference>
<dbReference type="CCDS" id="CCDS9610.1">
    <molecule id="Q8TEB1-1"/>
</dbReference>
<dbReference type="RefSeq" id="NP_001156956.1">
    <molecule id="Q8TEB1-1"/>
    <property type="nucleotide sequence ID" value="NM_001163484.2"/>
</dbReference>
<dbReference type="RefSeq" id="NP_079506.3">
    <molecule id="Q8TEB1-1"/>
    <property type="nucleotide sequence ID" value="NM_025230.4"/>
</dbReference>
<dbReference type="RefSeq" id="NP_852002.1">
    <molecule id="Q8TEB1-2"/>
    <property type="nucleotide sequence ID" value="NM_181357.2"/>
</dbReference>
<dbReference type="SMR" id="Q8TEB1"/>
<dbReference type="BioGRID" id="123251">
    <property type="interactions" value="156"/>
</dbReference>
<dbReference type="ComplexPortal" id="CPX-2403">
    <property type="entry name" value="CRL4-DCAF11 E3 ubiquitin ligase complex, CUL4A variant"/>
</dbReference>
<dbReference type="ComplexPortal" id="CPX-2404">
    <property type="entry name" value="CRL4-DCAF11 E3 ubiquitin ligase complex, CUL4B variant"/>
</dbReference>
<dbReference type="FunCoup" id="Q8TEB1">
    <property type="interactions" value="1090"/>
</dbReference>
<dbReference type="IntAct" id="Q8TEB1">
    <property type="interactions" value="62"/>
</dbReference>
<dbReference type="MINT" id="Q8TEB1"/>
<dbReference type="STRING" id="9606.ENSP00000415556"/>
<dbReference type="GlyGen" id="Q8TEB1">
    <property type="glycosylation" value="2 sites, 1 N-linked glycan (1 site)"/>
</dbReference>
<dbReference type="iPTMnet" id="Q8TEB1"/>
<dbReference type="PhosphoSitePlus" id="Q8TEB1"/>
<dbReference type="BioMuta" id="DCAF11"/>
<dbReference type="DMDM" id="37538034"/>
<dbReference type="jPOST" id="Q8TEB1"/>
<dbReference type="MassIVE" id="Q8TEB1"/>
<dbReference type="PaxDb" id="9606-ENSP00000415556"/>
<dbReference type="PeptideAtlas" id="Q8TEB1"/>
<dbReference type="ProteomicsDB" id="74434">
    <molecule id="Q8TEB1-1"/>
</dbReference>
<dbReference type="ProteomicsDB" id="74435">
    <molecule id="Q8TEB1-2"/>
</dbReference>
<dbReference type="ProteomicsDB" id="74436">
    <molecule id="Q8TEB1-3"/>
</dbReference>
<dbReference type="Pumba" id="Q8TEB1"/>
<dbReference type="Antibodypedia" id="22622">
    <property type="antibodies" value="86 antibodies from 19 providers"/>
</dbReference>
<dbReference type="DNASU" id="80344"/>
<dbReference type="Ensembl" id="ENST00000396936.5">
    <molecule id="Q8TEB1-3"/>
    <property type="protein sequence ID" value="ENSP00000380142.1"/>
    <property type="gene ID" value="ENSG00000100897.18"/>
</dbReference>
<dbReference type="Ensembl" id="ENST00000396941.8">
    <molecule id="Q8TEB1-2"/>
    <property type="protein sequence ID" value="ENSP00000380146.4"/>
    <property type="gene ID" value="ENSG00000100897.18"/>
</dbReference>
<dbReference type="Ensembl" id="ENST00000446197.8">
    <molecule id="Q8TEB1-1"/>
    <property type="protein sequence ID" value="ENSP00000415556.4"/>
    <property type="gene ID" value="ENSG00000100897.18"/>
</dbReference>
<dbReference type="Ensembl" id="ENST00000559115.5">
    <molecule id="Q8TEB1-1"/>
    <property type="protein sequence ID" value="ENSP00000452898.1"/>
    <property type="gene ID" value="ENSG00000100897.18"/>
</dbReference>
<dbReference type="Ensembl" id="ENST00000642239.1">
    <molecule id="Q8TEB1-1"/>
    <property type="protein sequence ID" value="ENSP00000494282.1"/>
    <property type="gene ID" value="ENSG00000284796.3"/>
</dbReference>
<dbReference type="Ensembl" id="ENST00000644566.1">
    <molecule id="Q8TEB1-2"/>
    <property type="protein sequence ID" value="ENSP00000493711.1"/>
    <property type="gene ID" value="ENSG00000284796.3"/>
</dbReference>
<dbReference type="Ensembl" id="ENST00000646524.1">
    <molecule id="Q8TEB1-3"/>
    <property type="protein sequence ID" value="ENSP00000495415.1"/>
    <property type="gene ID" value="ENSG00000284796.3"/>
</dbReference>
<dbReference type="Ensembl" id="ENST00000646568.3">
    <molecule id="Q8TEB1-1"/>
    <property type="protein sequence ID" value="ENSP00000495416.1"/>
    <property type="gene ID" value="ENSG00000284796.3"/>
</dbReference>
<dbReference type="GeneID" id="80344"/>
<dbReference type="KEGG" id="hsa:80344"/>
<dbReference type="MANE-Select" id="ENST00000446197.8">
    <property type="protein sequence ID" value="ENSP00000415556.4"/>
    <property type="RefSeq nucleotide sequence ID" value="NM_025230.5"/>
    <property type="RefSeq protein sequence ID" value="NP_079506.3"/>
</dbReference>
<dbReference type="UCSC" id="uc001wlv.4">
    <molecule id="Q8TEB1-1"/>
    <property type="organism name" value="human"/>
</dbReference>
<dbReference type="AGR" id="HGNC:20258"/>
<dbReference type="CTD" id="80344"/>
<dbReference type="DisGeNET" id="80344"/>
<dbReference type="GeneCards" id="DCAF11"/>
<dbReference type="HGNC" id="HGNC:20258">
    <property type="gene designation" value="DCAF11"/>
</dbReference>
<dbReference type="HPA" id="ENSG00000100897">
    <property type="expression patterns" value="Low tissue specificity"/>
</dbReference>
<dbReference type="MIM" id="613317">
    <property type="type" value="gene"/>
</dbReference>
<dbReference type="neXtProt" id="NX_Q8TEB1"/>
<dbReference type="OpenTargets" id="ENSG00000100897"/>
<dbReference type="PharmGKB" id="PA165478701"/>
<dbReference type="VEuPathDB" id="HostDB:ENSG00000100897"/>
<dbReference type="eggNOG" id="KOG0266">
    <property type="taxonomic scope" value="Eukaryota"/>
</dbReference>
<dbReference type="GeneTree" id="ENSGT00720000108873"/>
<dbReference type="HOGENOM" id="CLU_014280_3_1_1"/>
<dbReference type="InParanoid" id="Q8TEB1"/>
<dbReference type="OMA" id="EHTFPQM"/>
<dbReference type="OrthoDB" id="63070at2759"/>
<dbReference type="PAN-GO" id="Q8TEB1">
    <property type="GO annotations" value="2 GO annotations based on evolutionary models"/>
</dbReference>
<dbReference type="PhylomeDB" id="Q8TEB1"/>
<dbReference type="TreeFam" id="TF314126"/>
<dbReference type="PathwayCommons" id="Q8TEB1"/>
<dbReference type="Reactome" id="R-HSA-8951664">
    <property type="pathway name" value="Neddylation"/>
</dbReference>
<dbReference type="SignaLink" id="Q8TEB1"/>
<dbReference type="SIGNOR" id="Q8TEB1"/>
<dbReference type="UniPathway" id="UPA00143"/>
<dbReference type="BioGRID-ORCS" id="80344">
    <property type="hits" value="10 hits in 1195 CRISPR screens"/>
</dbReference>
<dbReference type="ChiTaRS" id="DCAF11">
    <property type="organism name" value="human"/>
</dbReference>
<dbReference type="GenomeRNAi" id="80344"/>
<dbReference type="Pharos" id="Q8TEB1">
    <property type="development level" value="Tbio"/>
</dbReference>
<dbReference type="PRO" id="PR:Q8TEB1"/>
<dbReference type="Proteomes" id="UP000005640">
    <property type="component" value="Chromosome 14"/>
</dbReference>
<dbReference type="RNAct" id="Q8TEB1">
    <property type="molecule type" value="protein"/>
</dbReference>
<dbReference type="Bgee" id="ENSG00000100897">
    <property type="expression patterns" value="Expressed in right lobe of liver and 107 other cell types or tissues"/>
</dbReference>
<dbReference type="ExpressionAtlas" id="Q8TEB1">
    <property type="expression patterns" value="baseline and differential"/>
</dbReference>
<dbReference type="GO" id="GO:0080008">
    <property type="term" value="C:Cul4-RING E3 ubiquitin ligase complex"/>
    <property type="evidence" value="ECO:0000314"/>
    <property type="project" value="UniProtKB"/>
</dbReference>
<dbReference type="GO" id="GO:0005654">
    <property type="term" value="C:nucleoplasm"/>
    <property type="evidence" value="ECO:0000314"/>
    <property type="project" value="HPA"/>
</dbReference>
<dbReference type="GO" id="GO:0035640">
    <property type="term" value="P:exploration behavior"/>
    <property type="evidence" value="ECO:0007669"/>
    <property type="project" value="Ensembl"/>
</dbReference>
<dbReference type="GO" id="GO:0010467">
    <property type="term" value="P:gene expression"/>
    <property type="evidence" value="ECO:0007669"/>
    <property type="project" value="Ensembl"/>
</dbReference>
<dbReference type="GO" id="GO:0007613">
    <property type="term" value="P:memory"/>
    <property type="evidence" value="ECO:0007669"/>
    <property type="project" value="Ensembl"/>
</dbReference>
<dbReference type="GO" id="GO:0043161">
    <property type="term" value="P:proteasome-mediated ubiquitin-dependent protein catabolic process"/>
    <property type="evidence" value="ECO:0000318"/>
    <property type="project" value="GO_Central"/>
</dbReference>
<dbReference type="GO" id="GO:0050821">
    <property type="term" value="P:protein stabilization"/>
    <property type="evidence" value="ECO:0007669"/>
    <property type="project" value="Ensembl"/>
</dbReference>
<dbReference type="GO" id="GO:0016567">
    <property type="term" value="P:protein ubiquitination"/>
    <property type="evidence" value="ECO:0007669"/>
    <property type="project" value="UniProtKB-UniPathway"/>
</dbReference>
<dbReference type="GO" id="GO:0003016">
    <property type="term" value="P:respiratory system process"/>
    <property type="evidence" value="ECO:0007669"/>
    <property type="project" value="Ensembl"/>
</dbReference>
<dbReference type="GO" id="GO:0006979">
    <property type="term" value="P:response to oxidative stress"/>
    <property type="evidence" value="ECO:0007669"/>
    <property type="project" value="Ensembl"/>
</dbReference>
<dbReference type="FunFam" id="2.130.10.10:FF:002187">
    <property type="entry name" value="DDB1 and CUL4 associated factor 11"/>
    <property type="match status" value="1"/>
</dbReference>
<dbReference type="FunFam" id="2.130.10.10:FF:000115">
    <property type="entry name" value="DDB1- and CUL4-associated factor 11 isoform X1"/>
    <property type="match status" value="1"/>
</dbReference>
<dbReference type="Gene3D" id="2.130.10.10">
    <property type="entry name" value="YVTN repeat-like/Quinoprotein amine dehydrogenase"/>
    <property type="match status" value="2"/>
</dbReference>
<dbReference type="InterPro" id="IPR051859">
    <property type="entry name" value="DCAF"/>
</dbReference>
<dbReference type="InterPro" id="IPR017399">
    <property type="entry name" value="DCAF11/LEC14B"/>
</dbReference>
<dbReference type="InterPro" id="IPR020472">
    <property type="entry name" value="G-protein_beta_WD-40_rep"/>
</dbReference>
<dbReference type="InterPro" id="IPR015943">
    <property type="entry name" value="WD40/YVTN_repeat-like_dom_sf"/>
</dbReference>
<dbReference type="InterPro" id="IPR036322">
    <property type="entry name" value="WD40_repeat_dom_sf"/>
</dbReference>
<dbReference type="InterPro" id="IPR001680">
    <property type="entry name" value="WD40_rpt"/>
</dbReference>
<dbReference type="PANTHER" id="PTHR19847">
    <property type="entry name" value="DDB1- AND CUL4-ASSOCIATED FACTOR 11"/>
    <property type="match status" value="1"/>
</dbReference>
<dbReference type="PANTHER" id="PTHR19847:SF7">
    <property type="entry name" value="DDB1- AND CUL4-ASSOCIATED FACTOR 11"/>
    <property type="match status" value="1"/>
</dbReference>
<dbReference type="Pfam" id="PF00400">
    <property type="entry name" value="WD40"/>
    <property type="match status" value="4"/>
</dbReference>
<dbReference type="PIRSF" id="PIRSF038135">
    <property type="entry name" value="WD_repeat_p23"/>
    <property type="match status" value="1"/>
</dbReference>
<dbReference type="PRINTS" id="PR00320">
    <property type="entry name" value="GPROTEINBRPT"/>
</dbReference>
<dbReference type="SMART" id="SM00320">
    <property type="entry name" value="WD40"/>
    <property type="match status" value="7"/>
</dbReference>
<dbReference type="SUPFAM" id="SSF50978">
    <property type="entry name" value="WD40 repeat-like"/>
    <property type="match status" value="1"/>
</dbReference>
<dbReference type="PROSITE" id="PS50082">
    <property type="entry name" value="WD_REPEATS_2"/>
    <property type="match status" value="3"/>
</dbReference>
<dbReference type="PROSITE" id="PS50294">
    <property type="entry name" value="WD_REPEATS_REGION"/>
    <property type="match status" value="1"/>
</dbReference>
<feature type="chain" id="PRO_0000051371" description="DDB1- and CUL4-associated factor 11">
    <location>
        <begin position="1"/>
        <end position="546"/>
    </location>
</feature>
<feature type="repeat" description="WD 1">
    <location>
        <begin position="170"/>
        <end position="210"/>
    </location>
</feature>
<feature type="repeat" description="WD 2">
    <location>
        <begin position="216"/>
        <end position="258"/>
    </location>
</feature>
<feature type="repeat" description="WD 3">
    <location>
        <begin position="263"/>
        <end position="302"/>
    </location>
</feature>
<feature type="repeat" description="WD 4">
    <location>
        <begin position="305"/>
        <end position="345"/>
    </location>
</feature>
<feature type="repeat" description="WD 5">
    <location>
        <begin position="353"/>
        <end position="392"/>
    </location>
</feature>
<feature type="repeat" description="WD 6">
    <location>
        <begin position="435"/>
        <end position="480"/>
    </location>
</feature>
<feature type="repeat" description="WD 7">
    <location>
        <begin position="481"/>
        <end position="520"/>
    </location>
</feature>
<feature type="region of interest" description="Disordered" evidence="2">
    <location>
        <begin position="1"/>
        <end position="40"/>
    </location>
</feature>
<feature type="region of interest" description="Disordered" evidence="2">
    <location>
        <begin position="523"/>
        <end position="546"/>
    </location>
</feature>
<feature type="compositionally biased region" description="Low complexity" evidence="2">
    <location>
        <begin position="1"/>
        <end position="19"/>
    </location>
</feature>
<feature type="compositionally biased region" description="Polar residues" evidence="2">
    <location>
        <begin position="536"/>
        <end position="546"/>
    </location>
</feature>
<feature type="modified residue" description="Phosphoserine" evidence="1">
    <location>
        <position position="75"/>
    </location>
</feature>
<feature type="splice variant" id="VSP_008423" description="In isoform 3." evidence="9">
    <original>MGSRNSSSAGSGSGDPSEGLPRRGAGLRRSEEEEEEDEDVDLAQVLAYLLRRGQVRLVQGGGAANLQFIQALLDSEEENDRAWDGRLGDRYNPPVDATPDTRELEFNEIKTQVELATGQLGLRRAAQKHSFPRMLHQRERGLCHRGSFSLGEQSRVISH</original>
    <variation>MTELGMVVLGIDTTHLWMLPLTPGSWNSMRSRHKWNWPQGSWGLGGPPRSTAFLECCTS</variation>
    <location>
        <begin position="1"/>
        <end position="159"/>
    </location>
</feature>
<feature type="splice variant" id="VSP_008424" description="In isoform 2." evidence="8 9">
    <location>
        <begin position="45"/>
        <end position="70"/>
    </location>
</feature>
<feature type="sequence variant" id="VAR_020121" description="In dbSNP:rs3825584." evidence="3 6 7">
    <original>R</original>
    <variation>H</variation>
    <location>
        <position position="207"/>
    </location>
</feature>
<feature type="sequence conflict" description="In Ref. 7." evidence="10" ref="7">
    <original>A</original>
    <variation>P</variation>
    <location>
        <position position="125"/>
    </location>
</feature>
<feature type="sequence conflict" description="In Ref. 7; AAG35498." evidence="10" ref="7">
    <original>L</original>
    <variation>S</variation>
    <location>
        <position position="222"/>
    </location>
</feature>
<feature type="sequence conflict" description="In Ref. 6; AAH08858." evidence="10" ref="6">
    <original>I</original>
    <variation>KS</variation>
    <location>
        <position position="331"/>
    </location>
</feature>
<feature type="modified residue" description="Phosphoserine" evidence="11">
    <location sequence="Q8TEB1-2">
        <position position="49"/>
    </location>
</feature>
<organism>
    <name type="scientific">Homo sapiens</name>
    <name type="common">Human</name>
    <dbReference type="NCBI Taxonomy" id="9606"/>
    <lineage>
        <taxon>Eukaryota</taxon>
        <taxon>Metazoa</taxon>
        <taxon>Chordata</taxon>
        <taxon>Craniata</taxon>
        <taxon>Vertebrata</taxon>
        <taxon>Euteleostomi</taxon>
        <taxon>Mammalia</taxon>
        <taxon>Eutheria</taxon>
        <taxon>Euarchontoglires</taxon>
        <taxon>Primates</taxon>
        <taxon>Haplorrhini</taxon>
        <taxon>Catarrhini</taxon>
        <taxon>Hominidae</taxon>
        <taxon>Homo</taxon>
    </lineage>
</organism>
<keyword id="KW-0025">Alternative splicing</keyword>
<keyword id="KW-0597">Phosphoprotein</keyword>
<keyword id="KW-1267">Proteomics identification</keyword>
<keyword id="KW-1185">Reference proteome</keyword>
<keyword id="KW-0677">Repeat</keyword>
<keyword id="KW-0833">Ubl conjugation pathway</keyword>
<keyword id="KW-0853">WD repeat</keyword>
<comment type="function">
    <text evidence="4 5">May function as a substrate receptor for CUL4-DDB1 E3 ubiquitin-protein ligase complex.</text>
</comment>
<comment type="pathway">
    <text>Protein modification; protein ubiquitination.</text>
</comment>
<comment type="subunit">
    <text evidence="4">Interacts with DDB1 and CUL4A.</text>
</comment>
<comment type="interaction">
    <interactant intactId="EBI-2213388">
        <id>Q8TEB1</id>
    </interactant>
    <interactant intactId="EBI-712648">
        <id>O95994</id>
        <label>AGR2</label>
    </interactant>
    <organismsDiffer>false</organismsDiffer>
    <experiments>3</experiments>
</comment>
<comment type="interaction">
    <interactant intactId="EBI-2213388">
        <id>Q8TEB1</id>
    </interactant>
    <interactant intactId="EBI-350322">
        <id>Q16531</id>
        <label>DDB1</label>
    </interactant>
    <organismsDiffer>false</organismsDiffer>
    <experiments>5</experiments>
</comment>
<comment type="interaction">
    <interactant intactId="EBI-2213388">
        <id>Q8TEB1</id>
    </interactant>
    <interactant intactId="EBI-10261098">
        <id>Q86YR5-3</id>
        <label>GPSM1</label>
    </interactant>
    <organismsDiffer>false</organismsDiffer>
    <experiments>3</experiments>
</comment>
<comment type="interaction">
    <interactant intactId="EBI-2213388">
        <id>Q8TEB1</id>
    </interactant>
    <interactant intactId="EBI-948278">
        <id>Q15293</id>
        <label>RCN1</label>
    </interactant>
    <organismsDiffer>false</organismsDiffer>
    <experiments>5</experiments>
</comment>
<comment type="interaction">
    <interactant intactId="EBI-2213388">
        <id>Q8TEB1</id>
    </interactant>
    <interactant intactId="EBI-746692">
        <id>P19237</id>
        <label>TNNI1</label>
    </interactant>
    <organismsDiffer>false</organismsDiffer>
    <experiments>3</experiments>
</comment>
<comment type="interaction">
    <interactant intactId="EBI-2213388">
        <id>Q8TEB1</id>
    </interactant>
    <interactant intactId="EBI-7746394">
        <id>P48788</id>
        <label>TNNI2</label>
    </interactant>
    <organismsDiffer>false</organismsDiffer>
    <experiments>3</experiments>
</comment>
<comment type="interaction">
    <interactant intactId="EBI-2213388">
        <id>Q8TEB1</id>
    </interactant>
    <interactant intactId="EBI-779991">
        <id>P12504</id>
        <label>vif</label>
    </interactant>
    <organismsDiffer>true</organismsDiffer>
    <experiments>3</experiments>
</comment>
<comment type="alternative products">
    <event type="alternative splicing"/>
    <isoform>
        <id>Q8TEB1-1</id>
        <name>1</name>
        <sequence type="displayed"/>
    </isoform>
    <isoform>
        <id>Q8TEB1-2</id>
        <name>2</name>
        <sequence type="described" ref="VSP_008424"/>
    </isoform>
    <isoform>
        <id>Q8TEB1-3</id>
        <name>3</name>
        <sequence type="described" ref="VSP_008423"/>
    </isoform>
</comment>
<comment type="sequence caution" evidence="10">
    <conflict type="erroneous initiation">
        <sequence resource="EMBL-CDS" id="AAG35498"/>
    </conflict>
</comment>
<comment type="sequence caution" evidence="10">
    <conflict type="frameshift">
        <sequence resource="EMBL-CDS" id="AAG44727"/>
    </conflict>
</comment>
<comment type="sequence caution" evidence="10">
    <conflict type="erroneous initiation">
        <sequence resource="EMBL-CDS" id="BAB15698"/>
    </conflict>
</comment>
<reference key="1">
    <citation type="submission" date="2000-05" db="EMBL/GenBank/DDBJ databases">
        <authorList>
            <person name="Xu X."/>
            <person name="Yang Y."/>
            <person name="Gao G."/>
            <person name="Xiao H."/>
            <person name="Chen Z."/>
            <person name="Han Z."/>
        </authorList>
    </citation>
    <scope>NUCLEOTIDE SEQUENCE (ISOFORM 1)</scope>
    <scope>VARIANT HIS-207</scope>
    <source>
        <tissue>Liver</tissue>
    </source>
</reference>
<reference key="2">
    <citation type="journal article" date="2004" name="Nat. Genet.">
        <title>Complete sequencing and characterization of 21,243 full-length human cDNAs.</title>
        <authorList>
            <person name="Ota T."/>
            <person name="Suzuki Y."/>
            <person name="Nishikawa T."/>
            <person name="Otsuki T."/>
            <person name="Sugiyama T."/>
            <person name="Irie R."/>
            <person name="Wakamatsu A."/>
            <person name="Hayashi K."/>
            <person name="Sato H."/>
            <person name="Nagai K."/>
            <person name="Kimura K."/>
            <person name="Makita H."/>
            <person name="Sekine M."/>
            <person name="Obayashi M."/>
            <person name="Nishi T."/>
            <person name="Shibahara T."/>
            <person name="Tanaka T."/>
            <person name="Ishii S."/>
            <person name="Yamamoto J."/>
            <person name="Saito K."/>
            <person name="Kawai Y."/>
            <person name="Isono Y."/>
            <person name="Nakamura Y."/>
            <person name="Nagahari K."/>
            <person name="Murakami K."/>
            <person name="Yasuda T."/>
            <person name="Iwayanagi T."/>
            <person name="Wagatsuma M."/>
            <person name="Shiratori A."/>
            <person name="Sudo H."/>
            <person name="Hosoiri T."/>
            <person name="Kaku Y."/>
            <person name="Kodaira H."/>
            <person name="Kondo H."/>
            <person name="Sugawara M."/>
            <person name="Takahashi M."/>
            <person name="Kanda K."/>
            <person name="Yokoi T."/>
            <person name="Furuya T."/>
            <person name="Kikkawa E."/>
            <person name="Omura Y."/>
            <person name="Abe K."/>
            <person name="Kamihara K."/>
            <person name="Katsuta N."/>
            <person name="Sato K."/>
            <person name="Tanikawa M."/>
            <person name="Yamazaki M."/>
            <person name="Ninomiya K."/>
            <person name="Ishibashi T."/>
            <person name="Yamashita H."/>
            <person name="Murakawa K."/>
            <person name="Fujimori K."/>
            <person name="Tanai H."/>
            <person name="Kimata M."/>
            <person name="Watanabe M."/>
            <person name="Hiraoka S."/>
            <person name="Chiba Y."/>
            <person name="Ishida S."/>
            <person name="Ono Y."/>
            <person name="Takiguchi S."/>
            <person name="Watanabe S."/>
            <person name="Yosida M."/>
            <person name="Hotuta T."/>
            <person name="Kusano J."/>
            <person name="Kanehori K."/>
            <person name="Takahashi-Fujii A."/>
            <person name="Hara H."/>
            <person name="Tanase T.-O."/>
            <person name="Nomura Y."/>
            <person name="Togiya S."/>
            <person name="Komai F."/>
            <person name="Hara R."/>
            <person name="Takeuchi K."/>
            <person name="Arita M."/>
            <person name="Imose N."/>
            <person name="Musashino K."/>
            <person name="Yuuki H."/>
            <person name="Oshima A."/>
            <person name="Sasaki N."/>
            <person name="Aotsuka S."/>
            <person name="Yoshikawa Y."/>
            <person name="Matsunawa H."/>
            <person name="Ichihara T."/>
            <person name="Shiohata N."/>
            <person name="Sano S."/>
            <person name="Moriya S."/>
            <person name="Momiyama H."/>
            <person name="Satoh N."/>
            <person name="Takami S."/>
            <person name="Terashima Y."/>
            <person name="Suzuki O."/>
            <person name="Nakagawa S."/>
            <person name="Senoh A."/>
            <person name="Mizoguchi H."/>
            <person name="Goto Y."/>
            <person name="Shimizu F."/>
            <person name="Wakebe H."/>
            <person name="Hishigaki H."/>
            <person name="Watanabe T."/>
            <person name="Sugiyama A."/>
            <person name="Takemoto M."/>
            <person name="Kawakami B."/>
            <person name="Yamazaki M."/>
            <person name="Watanabe K."/>
            <person name="Kumagai A."/>
            <person name="Itakura S."/>
            <person name="Fukuzumi Y."/>
            <person name="Fujimori Y."/>
            <person name="Komiyama M."/>
            <person name="Tashiro H."/>
            <person name="Tanigami A."/>
            <person name="Fujiwara T."/>
            <person name="Ono T."/>
            <person name="Yamada K."/>
            <person name="Fujii Y."/>
            <person name="Ozaki K."/>
            <person name="Hirao M."/>
            <person name="Ohmori Y."/>
            <person name="Kawabata A."/>
            <person name="Hikiji T."/>
            <person name="Kobatake N."/>
            <person name="Inagaki H."/>
            <person name="Ikema Y."/>
            <person name="Okamoto S."/>
            <person name="Okitani R."/>
            <person name="Kawakami T."/>
            <person name="Noguchi S."/>
            <person name="Itoh T."/>
            <person name="Shigeta K."/>
            <person name="Senba T."/>
            <person name="Matsumura K."/>
            <person name="Nakajima Y."/>
            <person name="Mizuno T."/>
            <person name="Morinaga M."/>
            <person name="Sasaki M."/>
            <person name="Togashi T."/>
            <person name="Oyama M."/>
            <person name="Hata H."/>
            <person name="Watanabe M."/>
            <person name="Komatsu T."/>
            <person name="Mizushima-Sugano J."/>
            <person name="Satoh T."/>
            <person name="Shirai Y."/>
            <person name="Takahashi Y."/>
            <person name="Nakagawa K."/>
            <person name="Okumura K."/>
            <person name="Nagase T."/>
            <person name="Nomura N."/>
            <person name="Kikuchi H."/>
            <person name="Masuho Y."/>
            <person name="Yamashita R."/>
            <person name="Nakai K."/>
            <person name="Yada T."/>
            <person name="Nakamura Y."/>
            <person name="Ohara O."/>
            <person name="Isogai T."/>
            <person name="Sugano S."/>
        </authorList>
    </citation>
    <scope>NUCLEOTIDE SEQUENCE [LARGE SCALE MRNA] (ISOFORMS 1 AND 2)</scope>
    <source>
        <tissue>Hepatoma</tissue>
        <tissue>Lung</tissue>
        <tissue>Trachea</tissue>
    </source>
</reference>
<reference key="3">
    <citation type="submission" date="2003-01" db="EMBL/GenBank/DDBJ databases">
        <title>Full-length cDNA libraries and normalization.</title>
        <authorList>
            <person name="Li W.B."/>
            <person name="Gruber C."/>
            <person name="Jessee J."/>
            <person name="Polayes D."/>
        </authorList>
    </citation>
    <scope>NUCLEOTIDE SEQUENCE [LARGE SCALE MRNA] (ISOFORMS 2 AND 3)</scope>
    <source>
        <tissue>Fetal brain</tissue>
        <tissue>Neuroblastoma</tissue>
    </source>
</reference>
<reference key="4">
    <citation type="journal article" date="2003" name="Nature">
        <title>The DNA sequence and analysis of human chromosome 14.</title>
        <authorList>
            <person name="Heilig R."/>
            <person name="Eckenberg R."/>
            <person name="Petit J.-L."/>
            <person name="Fonknechten N."/>
            <person name="Da Silva C."/>
            <person name="Cattolico L."/>
            <person name="Levy M."/>
            <person name="Barbe V."/>
            <person name="De Berardinis V."/>
            <person name="Ureta-Vidal A."/>
            <person name="Pelletier E."/>
            <person name="Vico V."/>
            <person name="Anthouard V."/>
            <person name="Rowen L."/>
            <person name="Madan A."/>
            <person name="Qin S."/>
            <person name="Sun H."/>
            <person name="Du H."/>
            <person name="Pepin K."/>
            <person name="Artiguenave F."/>
            <person name="Robert C."/>
            <person name="Cruaud C."/>
            <person name="Bruels T."/>
            <person name="Jaillon O."/>
            <person name="Friedlander L."/>
            <person name="Samson G."/>
            <person name="Brottier P."/>
            <person name="Cure S."/>
            <person name="Segurens B."/>
            <person name="Aniere F."/>
            <person name="Samain S."/>
            <person name="Crespeau H."/>
            <person name="Abbasi N."/>
            <person name="Aiach N."/>
            <person name="Boscus D."/>
            <person name="Dickhoff R."/>
            <person name="Dors M."/>
            <person name="Dubois I."/>
            <person name="Friedman C."/>
            <person name="Gouyvenoux M."/>
            <person name="James R."/>
            <person name="Madan A."/>
            <person name="Mairey-Estrada B."/>
            <person name="Mangenot S."/>
            <person name="Martins N."/>
            <person name="Menard M."/>
            <person name="Oztas S."/>
            <person name="Ratcliffe A."/>
            <person name="Shaffer T."/>
            <person name="Trask B."/>
            <person name="Vacherie B."/>
            <person name="Bellemere C."/>
            <person name="Belser C."/>
            <person name="Besnard-Gonnet M."/>
            <person name="Bartol-Mavel D."/>
            <person name="Boutard M."/>
            <person name="Briez-Silla S."/>
            <person name="Combette S."/>
            <person name="Dufosse-Laurent V."/>
            <person name="Ferron C."/>
            <person name="Lechaplais C."/>
            <person name="Louesse C."/>
            <person name="Muselet D."/>
            <person name="Magdelenat G."/>
            <person name="Pateau E."/>
            <person name="Petit E."/>
            <person name="Sirvain-Trukniewicz P."/>
            <person name="Trybou A."/>
            <person name="Vega-Czarny N."/>
            <person name="Bataille E."/>
            <person name="Bluet E."/>
            <person name="Bordelais I."/>
            <person name="Dubois M."/>
            <person name="Dumont C."/>
            <person name="Guerin T."/>
            <person name="Haffray S."/>
            <person name="Hammadi R."/>
            <person name="Muanga J."/>
            <person name="Pellouin V."/>
            <person name="Robert D."/>
            <person name="Wunderle E."/>
            <person name="Gauguet G."/>
            <person name="Roy A."/>
            <person name="Sainte-Marthe L."/>
            <person name="Verdier J."/>
            <person name="Verdier-Discala C."/>
            <person name="Hillier L.W."/>
            <person name="Fulton L."/>
            <person name="McPherson J."/>
            <person name="Matsuda F."/>
            <person name="Wilson R."/>
            <person name="Scarpelli C."/>
            <person name="Gyapay G."/>
            <person name="Wincker P."/>
            <person name="Saurin W."/>
            <person name="Quetier F."/>
            <person name="Waterston R."/>
            <person name="Hood L."/>
            <person name="Weissenbach J."/>
        </authorList>
    </citation>
    <scope>NUCLEOTIDE SEQUENCE [LARGE SCALE GENOMIC DNA]</scope>
</reference>
<reference key="5">
    <citation type="submission" date="2005-09" db="EMBL/GenBank/DDBJ databases">
        <authorList>
            <person name="Mural R.J."/>
            <person name="Istrail S."/>
            <person name="Sutton G.G."/>
            <person name="Florea L."/>
            <person name="Halpern A.L."/>
            <person name="Mobarry C.M."/>
            <person name="Lippert R."/>
            <person name="Walenz B."/>
            <person name="Shatkay H."/>
            <person name="Dew I."/>
            <person name="Miller J.R."/>
            <person name="Flanigan M.J."/>
            <person name="Edwards N.J."/>
            <person name="Bolanos R."/>
            <person name="Fasulo D."/>
            <person name="Halldorsson B.V."/>
            <person name="Hannenhalli S."/>
            <person name="Turner R."/>
            <person name="Yooseph S."/>
            <person name="Lu F."/>
            <person name="Nusskern D.R."/>
            <person name="Shue B.C."/>
            <person name="Zheng X.H."/>
            <person name="Zhong F."/>
            <person name="Delcher A.L."/>
            <person name="Huson D.H."/>
            <person name="Kravitz S.A."/>
            <person name="Mouchard L."/>
            <person name="Reinert K."/>
            <person name="Remington K.A."/>
            <person name="Clark A.G."/>
            <person name="Waterman M.S."/>
            <person name="Eichler E.E."/>
            <person name="Adams M.D."/>
            <person name="Hunkapiller M.W."/>
            <person name="Myers E.W."/>
            <person name="Venter J.C."/>
        </authorList>
    </citation>
    <scope>NUCLEOTIDE SEQUENCE [LARGE SCALE GENOMIC DNA]</scope>
</reference>
<reference key="6">
    <citation type="journal article" date="2004" name="Genome Res.">
        <title>The status, quality, and expansion of the NIH full-length cDNA project: the Mammalian Gene Collection (MGC).</title>
        <authorList>
            <consortium name="The MGC Project Team"/>
        </authorList>
    </citation>
    <scope>NUCLEOTIDE SEQUENCE [LARGE SCALE MRNA] (ISOFORM 1)</scope>
    <scope>VARIANT HIS-207</scope>
    <source>
        <tissue>Brain</tissue>
        <tissue>Eye</tissue>
    </source>
</reference>
<reference key="7">
    <citation type="submission" date="1999-02" db="EMBL/GenBank/DDBJ databases">
        <title>Functional prediction of the coding sequences of 75 new genes deduced by analysis of cDNA clones from human fetal liver.</title>
        <authorList>
            <person name="Zhang C."/>
            <person name="Yu Y."/>
            <person name="Zhang S."/>
            <person name="Wei H."/>
            <person name="Bi J."/>
            <person name="Zhou G."/>
            <person name="Dong C."/>
            <person name="Zai Y."/>
            <person name="Xu W."/>
            <person name="Gao F."/>
            <person name="Liu M."/>
            <person name="He F."/>
        </authorList>
    </citation>
    <scope>NUCLEOTIDE SEQUENCE [LARGE SCALE MRNA] OF 5-546</scope>
    <scope>VARIANT HIS-207</scope>
    <source>
        <tissue>Fetal liver</tissue>
    </source>
</reference>
<reference key="8">
    <citation type="journal article" date="2007" name="BMC Genomics">
        <title>The full-ORF clone resource of the German cDNA consortium.</title>
        <authorList>
            <person name="Bechtel S."/>
            <person name="Rosenfelder H."/>
            <person name="Duda A."/>
            <person name="Schmidt C.P."/>
            <person name="Ernst U."/>
            <person name="Wellenreuther R."/>
            <person name="Mehrle A."/>
            <person name="Schuster C."/>
            <person name="Bahr A."/>
            <person name="Bloecker H."/>
            <person name="Heubner D."/>
            <person name="Hoerlein A."/>
            <person name="Michel G."/>
            <person name="Wedler H."/>
            <person name="Koehrer K."/>
            <person name="Ottenwaelder B."/>
            <person name="Poustka A."/>
            <person name="Wiemann S."/>
            <person name="Schupp I."/>
        </authorList>
    </citation>
    <scope>NUCLEOTIDE SEQUENCE [LARGE SCALE MRNA] OF 252-546</scope>
    <source>
        <tissue>Testis</tissue>
    </source>
</reference>
<reference key="9">
    <citation type="journal article" date="2006" name="Mol. Cell">
        <title>A family of diverse Cul4-Ddb1-interacting proteins includes Cdt2, which is required for S phase destruction of the replication factor Cdt1.</title>
        <authorList>
            <person name="Jin J."/>
            <person name="Arias E.E."/>
            <person name="Chen J."/>
            <person name="Harper J.W."/>
            <person name="Walter J.C."/>
        </authorList>
    </citation>
    <scope>FUNCTION</scope>
    <scope>INTERACTION WITH DDB1 AND CUL4A</scope>
    <scope>IDENTIFICATION BY MASS SPECTROMETRY</scope>
</reference>
<reference key="10">
    <citation type="journal article" date="2006" name="Nature">
        <title>Molecular architecture and assembly of the DDB1-CUL4A ubiquitin ligase machinery.</title>
        <authorList>
            <person name="Angers S."/>
            <person name="Li T."/>
            <person name="Yi X."/>
            <person name="MacCoss M.J."/>
            <person name="Moon R.T."/>
            <person name="Zheng N."/>
        </authorList>
    </citation>
    <scope>FUNCTION</scope>
</reference>
<reference key="11">
    <citation type="journal article" date="2013" name="J. Proteome Res.">
        <title>Toward a comprehensive characterization of a human cancer cell phosphoproteome.</title>
        <authorList>
            <person name="Zhou H."/>
            <person name="Di Palma S."/>
            <person name="Preisinger C."/>
            <person name="Peng M."/>
            <person name="Polat A.N."/>
            <person name="Heck A.J."/>
            <person name="Mohammed S."/>
        </authorList>
    </citation>
    <scope>IDENTIFICATION BY MASS SPECTROMETRY [LARGE SCALE ANALYSIS]</scope>
    <source>
        <tissue>Cervix carcinoma</tissue>
    </source>
</reference>
<reference key="12">
    <citation type="journal article" date="2014" name="J. Proteomics">
        <title>An enzyme assisted RP-RPLC approach for in-depth analysis of human liver phosphoproteome.</title>
        <authorList>
            <person name="Bian Y."/>
            <person name="Song C."/>
            <person name="Cheng K."/>
            <person name="Dong M."/>
            <person name="Wang F."/>
            <person name="Huang J."/>
            <person name="Sun D."/>
            <person name="Wang L."/>
            <person name="Ye M."/>
            <person name="Zou H."/>
        </authorList>
    </citation>
    <scope>PHOSPHORYLATION [LARGE SCALE ANALYSIS] AT SER-49 (ISOFORM 2)</scope>
    <scope>IDENTIFICATION BY MASS SPECTROMETRY [LARGE SCALE ANALYSIS]</scope>
    <source>
        <tissue>Liver</tissue>
    </source>
</reference>
<protein>
    <recommendedName>
        <fullName>DDB1- and CUL4-associated factor 11</fullName>
    </recommendedName>
    <alternativeName>
        <fullName>WD repeat-containing protein 23</fullName>
    </alternativeName>
</protein>